<comment type="function">
    <text evidence="5">Catalyzes the reduction of all-trans-retinal to all-trans-retinol in the presence of NADPH.</text>
</comment>
<comment type="catalytic activity">
    <reaction evidence="5">
        <text>all-trans-retinol + NADP(+) = all-trans-retinal + NADPH + H(+)</text>
        <dbReference type="Rhea" id="RHEA:25033"/>
        <dbReference type="ChEBI" id="CHEBI:15378"/>
        <dbReference type="ChEBI" id="CHEBI:17336"/>
        <dbReference type="ChEBI" id="CHEBI:17898"/>
        <dbReference type="ChEBI" id="CHEBI:57783"/>
        <dbReference type="ChEBI" id="CHEBI:58349"/>
        <dbReference type="EC" id="1.1.1.300"/>
    </reaction>
</comment>
<comment type="subcellular location">
    <subcellularLocation>
        <location evidence="8">Membrane</location>
        <topology evidence="8">Multi-pass membrane protein</topology>
    </subcellularLocation>
</comment>
<comment type="alternative products">
    <event type="alternative splicing"/>
    <isoform>
        <id>O75911-1</id>
        <name>1</name>
        <sequence type="displayed"/>
    </isoform>
    <isoform>
        <id>O75911-2</id>
        <name>2</name>
        <sequence type="described" ref="VSP_013256 VSP_013257"/>
    </isoform>
</comment>
<comment type="tissue specificity">
    <text evidence="3 5">Widely expressed with highest levels found in heart, placenta, lung, liver, kidney, pancreas, thyroid, testis, stomach, trachea and spinal cord. Lower levels found in skeletal muscle, intestine and lymph node. No expression detected in brain. In the retina, expressed in cone but not rod outer segments.</text>
</comment>
<comment type="induction">
    <text evidence="3">By retinoic acid.</text>
</comment>
<comment type="miscellaneous">
    <text>Located in a region of chromosome 1 which is often deleted in aggressive neuroblastoma tumors.</text>
</comment>
<comment type="similarity">
    <text evidence="8">Belongs to the short-chain dehydrogenases/reductases (SDR) family.</text>
</comment>
<comment type="sequence caution" evidence="8">
    <conflict type="frameshift">
        <sequence resource="EMBL-CDS" id="AAQ88460"/>
    </conflict>
</comment>
<accession>O75911</accession>
<accession>B2R7F3</accession>
<accession>Q5VUY3</accession>
<accession>Q6UY38</accession>
<accession>Q9BUC8</accession>
<proteinExistence type="evidence at protein level"/>
<organism>
    <name type="scientific">Homo sapiens</name>
    <name type="common">Human</name>
    <dbReference type="NCBI Taxonomy" id="9606"/>
    <lineage>
        <taxon>Eukaryota</taxon>
        <taxon>Metazoa</taxon>
        <taxon>Chordata</taxon>
        <taxon>Craniata</taxon>
        <taxon>Vertebrata</taxon>
        <taxon>Euteleostomi</taxon>
        <taxon>Mammalia</taxon>
        <taxon>Eutheria</taxon>
        <taxon>Euarchontoglires</taxon>
        <taxon>Primates</taxon>
        <taxon>Haplorrhini</taxon>
        <taxon>Catarrhini</taxon>
        <taxon>Hominidae</taxon>
        <taxon>Homo</taxon>
    </lineage>
</organism>
<reference key="1">
    <citation type="journal article" date="1998" name="J. Biol. Chem.">
        <title>Molecular characterization of a novel short-chain dehydrogenase/reductase that reduces all-trans-retinal.</title>
        <authorList>
            <person name="Haeseleer F."/>
            <person name="Huang J."/>
            <person name="Lebioda L."/>
            <person name="Saari J.C."/>
            <person name="Palczewski K."/>
        </authorList>
    </citation>
    <scope>NUCLEOTIDE SEQUENCE [MRNA] (ISOFORM 1)</scope>
    <scope>FUNCTION</scope>
    <scope>TISSUE SPECIFICITY</scope>
    <scope>VARIANT ALA-2</scope>
    <scope>CATALYTIC ACTIVITY</scope>
    <source>
        <tissue>Retina</tissue>
    </source>
</reference>
<reference key="2">
    <citation type="submission" date="1999-08" db="EMBL/GenBank/DDBJ databases">
        <title>Structure of retinal short-chain dehydrogenase/reductase retSDR1 gene.</title>
        <authorList>
            <person name="Haeseleer F."/>
            <person name="Palczewski K."/>
        </authorList>
    </citation>
    <scope>NUCLEOTIDE SEQUENCE [GENOMIC DNA]</scope>
    <scope>VARIANT ALA-2</scope>
    <source>
        <tissue>Retina</tissue>
    </source>
</reference>
<reference key="3">
    <citation type="journal article" date="2003" name="Genome Res.">
        <title>The secreted protein discovery initiative (SPDI), a large-scale effort to identify novel human secreted and transmembrane proteins: a bioinformatics assessment.</title>
        <authorList>
            <person name="Clark H.F."/>
            <person name="Gurney A.L."/>
            <person name="Abaya E."/>
            <person name="Baker K."/>
            <person name="Baldwin D.T."/>
            <person name="Brush J."/>
            <person name="Chen J."/>
            <person name="Chow B."/>
            <person name="Chui C."/>
            <person name="Crowley C."/>
            <person name="Currell B."/>
            <person name="Deuel B."/>
            <person name="Dowd P."/>
            <person name="Eaton D."/>
            <person name="Foster J.S."/>
            <person name="Grimaldi C."/>
            <person name="Gu Q."/>
            <person name="Hass P.E."/>
            <person name="Heldens S."/>
            <person name="Huang A."/>
            <person name="Kim H.S."/>
            <person name="Klimowski L."/>
            <person name="Jin Y."/>
            <person name="Johnson S."/>
            <person name="Lee J."/>
            <person name="Lewis L."/>
            <person name="Liao D."/>
            <person name="Mark M.R."/>
            <person name="Robbie E."/>
            <person name="Sanchez C."/>
            <person name="Schoenfeld J."/>
            <person name="Seshagiri S."/>
            <person name="Simmons L."/>
            <person name="Singh J."/>
            <person name="Smith V."/>
            <person name="Stinson J."/>
            <person name="Vagts A."/>
            <person name="Vandlen R.L."/>
            <person name="Watanabe C."/>
            <person name="Wieand D."/>
            <person name="Woods K."/>
            <person name="Xie M.-H."/>
            <person name="Yansura D.G."/>
            <person name="Yi S."/>
            <person name="Yu G."/>
            <person name="Yuan J."/>
            <person name="Zhang M."/>
            <person name="Zhang Z."/>
            <person name="Goddard A.D."/>
            <person name="Wood W.I."/>
            <person name="Godowski P.J."/>
            <person name="Gray A.M."/>
        </authorList>
    </citation>
    <scope>NUCLEOTIDE SEQUENCE [LARGE SCALE MRNA] (ISOFORM 2)</scope>
</reference>
<reference key="4">
    <citation type="journal article" date="2004" name="Nat. Genet.">
        <title>Complete sequencing and characterization of 21,243 full-length human cDNAs.</title>
        <authorList>
            <person name="Ota T."/>
            <person name="Suzuki Y."/>
            <person name="Nishikawa T."/>
            <person name="Otsuki T."/>
            <person name="Sugiyama T."/>
            <person name="Irie R."/>
            <person name="Wakamatsu A."/>
            <person name="Hayashi K."/>
            <person name="Sato H."/>
            <person name="Nagai K."/>
            <person name="Kimura K."/>
            <person name="Makita H."/>
            <person name="Sekine M."/>
            <person name="Obayashi M."/>
            <person name="Nishi T."/>
            <person name="Shibahara T."/>
            <person name="Tanaka T."/>
            <person name="Ishii S."/>
            <person name="Yamamoto J."/>
            <person name="Saito K."/>
            <person name="Kawai Y."/>
            <person name="Isono Y."/>
            <person name="Nakamura Y."/>
            <person name="Nagahari K."/>
            <person name="Murakami K."/>
            <person name="Yasuda T."/>
            <person name="Iwayanagi T."/>
            <person name="Wagatsuma M."/>
            <person name="Shiratori A."/>
            <person name="Sudo H."/>
            <person name="Hosoiri T."/>
            <person name="Kaku Y."/>
            <person name="Kodaira H."/>
            <person name="Kondo H."/>
            <person name="Sugawara M."/>
            <person name="Takahashi M."/>
            <person name="Kanda K."/>
            <person name="Yokoi T."/>
            <person name="Furuya T."/>
            <person name="Kikkawa E."/>
            <person name="Omura Y."/>
            <person name="Abe K."/>
            <person name="Kamihara K."/>
            <person name="Katsuta N."/>
            <person name="Sato K."/>
            <person name="Tanikawa M."/>
            <person name="Yamazaki M."/>
            <person name="Ninomiya K."/>
            <person name="Ishibashi T."/>
            <person name="Yamashita H."/>
            <person name="Murakawa K."/>
            <person name="Fujimori K."/>
            <person name="Tanai H."/>
            <person name="Kimata M."/>
            <person name="Watanabe M."/>
            <person name="Hiraoka S."/>
            <person name="Chiba Y."/>
            <person name="Ishida S."/>
            <person name="Ono Y."/>
            <person name="Takiguchi S."/>
            <person name="Watanabe S."/>
            <person name="Yosida M."/>
            <person name="Hotuta T."/>
            <person name="Kusano J."/>
            <person name="Kanehori K."/>
            <person name="Takahashi-Fujii A."/>
            <person name="Hara H."/>
            <person name="Tanase T.-O."/>
            <person name="Nomura Y."/>
            <person name="Togiya S."/>
            <person name="Komai F."/>
            <person name="Hara R."/>
            <person name="Takeuchi K."/>
            <person name="Arita M."/>
            <person name="Imose N."/>
            <person name="Musashino K."/>
            <person name="Yuuki H."/>
            <person name="Oshima A."/>
            <person name="Sasaki N."/>
            <person name="Aotsuka S."/>
            <person name="Yoshikawa Y."/>
            <person name="Matsunawa H."/>
            <person name="Ichihara T."/>
            <person name="Shiohata N."/>
            <person name="Sano S."/>
            <person name="Moriya S."/>
            <person name="Momiyama H."/>
            <person name="Satoh N."/>
            <person name="Takami S."/>
            <person name="Terashima Y."/>
            <person name="Suzuki O."/>
            <person name="Nakagawa S."/>
            <person name="Senoh A."/>
            <person name="Mizoguchi H."/>
            <person name="Goto Y."/>
            <person name="Shimizu F."/>
            <person name="Wakebe H."/>
            <person name="Hishigaki H."/>
            <person name="Watanabe T."/>
            <person name="Sugiyama A."/>
            <person name="Takemoto M."/>
            <person name="Kawakami B."/>
            <person name="Yamazaki M."/>
            <person name="Watanabe K."/>
            <person name="Kumagai A."/>
            <person name="Itakura S."/>
            <person name="Fukuzumi Y."/>
            <person name="Fujimori Y."/>
            <person name="Komiyama M."/>
            <person name="Tashiro H."/>
            <person name="Tanigami A."/>
            <person name="Fujiwara T."/>
            <person name="Ono T."/>
            <person name="Yamada K."/>
            <person name="Fujii Y."/>
            <person name="Ozaki K."/>
            <person name="Hirao M."/>
            <person name="Ohmori Y."/>
            <person name="Kawabata A."/>
            <person name="Hikiji T."/>
            <person name="Kobatake N."/>
            <person name="Inagaki H."/>
            <person name="Ikema Y."/>
            <person name="Okamoto S."/>
            <person name="Okitani R."/>
            <person name="Kawakami T."/>
            <person name="Noguchi S."/>
            <person name="Itoh T."/>
            <person name="Shigeta K."/>
            <person name="Senba T."/>
            <person name="Matsumura K."/>
            <person name="Nakajima Y."/>
            <person name="Mizuno T."/>
            <person name="Morinaga M."/>
            <person name="Sasaki M."/>
            <person name="Togashi T."/>
            <person name="Oyama M."/>
            <person name="Hata H."/>
            <person name="Watanabe M."/>
            <person name="Komatsu T."/>
            <person name="Mizushima-Sugano J."/>
            <person name="Satoh T."/>
            <person name="Shirai Y."/>
            <person name="Takahashi Y."/>
            <person name="Nakagawa K."/>
            <person name="Okumura K."/>
            <person name="Nagase T."/>
            <person name="Nomura N."/>
            <person name="Kikuchi H."/>
            <person name="Masuho Y."/>
            <person name="Yamashita R."/>
            <person name="Nakai K."/>
            <person name="Yada T."/>
            <person name="Nakamura Y."/>
            <person name="Ohara O."/>
            <person name="Isogai T."/>
            <person name="Sugano S."/>
        </authorList>
    </citation>
    <scope>NUCLEOTIDE SEQUENCE [LARGE SCALE MRNA]</scope>
    <scope>VARIANT ALA-2</scope>
</reference>
<reference key="5">
    <citation type="journal article" date="2007" name="BMC Genomics">
        <title>The full-ORF clone resource of the German cDNA consortium.</title>
        <authorList>
            <person name="Bechtel S."/>
            <person name="Rosenfelder H."/>
            <person name="Duda A."/>
            <person name="Schmidt C.P."/>
            <person name="Ernst U."/>
            <person name="Wellenreuther R."/>
            <person name="Mehrle A."/>
            <person name="Schuster C."/>
            <person name="Bahr A."/>
            <person name="Bloecker H."/>
            <person name="Heubner D."/>
            <person name="Hoerlein A."/>
            <person name="Michel G."/>
            <person name="Wedler H."/>
            <person name="Koehrer K."/>
            <person name="Ottenwaelder B."/>
            <person name="Poustka A."/>
            <person name="Wiemann S."/>
            <person name="Schupp I."/>
        </authorList>
    </citation>
    <scope>NUCLEOTIDE SEQUENCE [LARGE SCALE MRNA] (ISOFORM 1)</scope>
    <source>
        <tissue>Colon endothelium</tissue>
    </source>
</reference>
<reference key="6">
    <citation type="journal article" date="2006" name="Nature">
        <title>The DNA sequence and biological annotation of human chromosome 1.</title>
        <authorList>
            <person name="Gregory S.G."/>
            <person name="Barlow K.F."/>
            <person name="McLay K.E."/>
            <person name="Kaul R."/>
            <person name="Swarbreck D."/>
            <person name="Dunham A."/>
            <person name="Scott C.E."/>
            <person name="Howe K.L."/>
            <person name="Woodfine K."/>
            <person name="Spencer C.C.A."/>
            <person name="Jones M.C."/>
            <person name="Gillson C."/>
            <person name="Searle S."/>
            <person name="Zhou Y."/>
            <person name="Kokocinski F."/>
            <person name="McDonald L."/>
            <person name="Evans R."/>
            <person name="Phillips K."/>
            <person name="Atkinson A."/>
            <person name="Cooper R."/>
            <person name="Jones C."/>
            <person name="Hall R.E."/>
            <person name="Andrews T.D."/>
            <person name="Lloyd C."/>
            <person name="Ainscough R."/>
            <person name="Almeida J.P."/>
            <person name="Ambrose K.D."/>
            <person name="Anderson F."/>
            <person name="Andrew R.W."/>
            <person name="Ashwell R.I.S."/>
            <person name="Aubin K."/>
            <person name="Babbage A.K."/>
            <person name="Bagguley C.L."/>
            <person name="Bailey J."/>
            <person name="Beasley H."/>
            <person name="Bethel G."/>
            <person name="Bird C.P."/>
            <person name="Bray-Allen S."/>
            <person name="Brown J.Y."/>
            <person name="Brown A.J."/>
            <person name="Buckley D."/>
            <person name="Burton J."/>
            <person name="Bye J."/>
            <person name="Carder C."/>
            <person name="Chapman J.C."/>
            <person name="Clark S.Y."/>
            <person name="Clarke G."/>
            <person name="Clee C."/>
            <person name="Cobley V."/>
            <person name="Collier R.E."/>
            <person name="Corby N."/>
            <person name="Coville G.J."/>
            <person name="Davies J."/>
            <person name="Deadman R."/>
            <person name="Dunn M."/>
            <person name="Earthrowl M."/>
            <person name="Ellington A.G."/>
            <person name="Errington H."/>
            <person name="Frankish A."/>
            <person name="Frankland J."/>
            <person name="French L."/>
            <person name="Garner P."/>
            <person name="Garnett J."/>
            <person name="Gay L."/>
            <person name="Ghori M.R.J."/>
            <person name="Gibson R."/>
            <person name="Gilby L.M."/>
            <person name="Gillett W."/>
            <person name="Glithero R.J."/>
            <person name="Grafham D.V."/>
            <person name="Griffiths C."/>
            <person name="Griffiths-Jones S."/>
            <person name="Grocock R."/>
            <person name="Hammond S."/>
            <person name="Harrison E.S.I."/>
            <person name="Hart E."/>
            <person name="Haugen E."/>
            <person name="Heath P.D."/>
            <person name="Holmes S."/>
            <person name="Holt K."/>
            <person name="Howden P.J."/>
            <person name="Hunt A.R."/>
            <person name="Hunt S.E."/>
            <person name="Hunter G."/>
            <person name="Isherwood J."/>
            <person name="James R."/>
            <person name="Johnson C."/>
            <person name="Johnson D."/>
            <person name="Joy A."/>
            <person name="Kay M."/>
            <person name="Kershaw J.K."/>
            <person name="Kibukawa M."/>
            <person name="Kimberley A.M."/>
            <person name="King A."/>
            <person name="Knights A.J."/>
            <person name="Lad H."/>
            <person name="Laird G."/>
            <person name="Lawlor S."/>
            <person name="Leongamornlert D.A."/>
            <person name="Lloyd D.M."/>
            <person name="Loveland J."/>
            <person name="Lovell J."/>
            <person name="Lush M.J."/>
            <person name="Lyne R."/>
            <person name="Martin S."/>
            <person name="Mashreghi-Mohammadi M."/>
            <person name="Matthews L."/>
            <person name="Matthews N.S.W."/>
            <person name="McLaren S."/>
            <person name="Milne S."/>
            <person name="Mistry S."/>
            <person name="Moore M.J.F."/>
            <person name="Nickerson T."/>
            <person name="O'Dell C.N."/>
            <person name="Oliver K."/>
            <person name="Palmeiri A."/>
            <person name="Palmer S.A."/>
            <person name="Parker A."/>
            <person name="Patel D."/>
            <person name="Pearce A.V."/>
            <person name="Peck A.I."/>
            <person name="Pelan S."/>
            <person name="Phelps K."/>
            <person name="Phillimore B.J."/>
            <person name="Plumb R."/>
            <person name="Rajan J."/>
            <person name="Raymond C."/>
            <person name="Rouse G."/>
            <person name="Saenphimmachak C."/>
            <person name="Sehra H.K."/>
            <person name="Sheridan E."/>
            <person name="Shownkeen R."/>
            <person name="Sims S."/>
            <person name="Skuce C.D."/>
            <person name="Smith M."/>
            <person name="Steward C."/>
            <person name="Subramanian S."/>
            <person name="Sycamore N."/>
            <person name="Tracey A."/>
            <person name="Tromans A."/>
            <person name="Van Helmond Z."/>
            <person name="Wall M."/>
            <person name="Wallis J.M."/>
            <person name="White S."/>
            <person name="Whitehead S.L."/>
            <person name="Wilkinson J.E."/>
            <person name="Willey D.L."/>
            <person name="Williams H."/>
            <person name="Wilming L."/>
            <person name="Wray P.W."/>
            <person name="Wu Z."/>
            <person name="Coulson A."/>
            <person name="Vaudin M."/>
            <person name="Sulston J.E."/>
            <person name="Durbin R.M."/>
            <person name="Hubbard T."/>
            <person name="Wooster R."/>
            <person name="Dunham I."/>
            <person name="Carter N.P."/>
            <person name="McVean G."/>
            <person name="Ross M.T."/>
            <person name="Harrow J."/>
            <person name="Olson M.V."/>
            <person name="Beck S."/>
            <person name="Rogers J."/>
            <person name="Bentley D.R."/>
        </authorList>
    </citation>
    <scope>NUCLEOTIDE SEQUENCE [LARGE SCALE GENOMIC DNA]</scope>
</reference>
<reference key="7">
    <citation type="submission" date="2005-07" db="EMBL/GenBank/DDBJ databases">
        <authorList>
            <person name="Mural R.J."/>
            <person name="Istrail S."/>
            <person name="Sutton G.G."/>
            <person name="Florea L."/>
            <person name="Halpern A.L."/>
            <person name="Mobarry C.M."/>
            <person name="Lippert R."/>
            <person name="Walenz B."/>
            <person name="Shatkay H."/>
            <person name="Dew I."/>
            <person name="Miller J.R."/>
            <person name="Flanigan M.J."/>
            <person name="Edwards N.J."/>
            <person name="Bolanos R."/>
            <person name="Fasulo D."/>
            <person name="Halldorsson B.V."/>
            <person name="Hannenhalli S."/>
            <person name="Turner R."/>
            <person name="Yooseph S."/>
            <person name="Lu F."/>
            <person name="Nusskern D.R."/>
            <person name="Shue B.C."/>
            <person name="Zheng X.H."/>
            <person name="Zhong F."/>
            <person name="Delcher A.L."/>
            <person name="Huson D.H."/>
            <person name="Kravitz S.A."/>
            <person name="Mouchard L."/>
            <person name="Reinert K."/>
            <person name="Remington K.A."/>
            <person name="Clark A.G."/>
            <person name="Waterman M.S."/>
            <person name="Eichler E.E."/>
            <person name="Adams M.D."/>
            <person name="Hunkapiller M.W."/>
            <person name="Myers E.W."/>
            <person name="Venter J.C."/>
        </authorList>
    </citation>
    <scope>NUCLEOTIDE SEQUENCE [LARGE SCALE GENOMIC DNA]</scope>
</reference>
<reference key="8">
    <citation type="journal article" date="2004" name="Genome Res.">
        <title>The status, quality, and expansion of the NIH full-length cDNA project: the Mammalian Gene Collection (MGC).</title>
        <authorList>
            <consortium name="The MGC Project Team"/>
        </authorList>
    </citation>
    <scope>NUCLEOTIDE SEQUENCE [LARGE SCALE MRNA] (ISOFORM 1)</scope>
    <source>
        <tissue>Uterus</tissue>
    </source>
</reference>
<reference key="9">
    <citation type="journal article" date="2002" name="Cancer Res.">
        <title>retSDR1, a short-chain retinol dehydrogenase/reductase, is retinoic acid-inducible and frequently deleted in human neuroblastoma cell lines.</title>
        <authorList>
            <person name="Cerignoli F."/>
            <person name="Guo X."/>
            <person name="Cardinali B."/>
            <person name="Rinaldi C."/>
            <person name="Casaletto J."/>
            <person name="Frati L."/>
            <person name="Screpanti I."/>
            <person name="Gudas L.J."/>
            <person name="Gulino A."/>
            <person name="Thiele C.J."/>
            <person name="Giannini G."/>
        </authorList>
    </citation>
    <scope>TISSUE SPECIFICITY</scope>
    <scope>INDUCTION</scope>
</reference>
<reference key="10">
    <citation type="journal article" date="2014" name="J. Proteomics">
        <title>An enzyme assisted RP-RPLC approach for in-depth analysis of human liver phosphoproteome.</title>
        <authorList>
            <person name="Bian Y."/>
            <person name="Song C."/>
            <person name="Cheng K."/>
            <person name="Dong M."/>
            <person name="Wang F."/>
            <person name="Huang J."/>
            <person name="Sun D."/>
            <person name="Wang L."/>
            <person name="Ye M."/>
            <person name="Zou H."/>
        </authorList>
    </citation>
    <scope>IDENTIFICATION BY MASS SPECTROMETRY [LARGE SCALE ANALYSIS]</scope>
    <source>
        <tissue>Liver</tissue>
    </source>
</reference>
<evidence type="ECO:0000250" key="1"/>
<evidence type="ECO:0000255" key="2"/>
<evidence type="ECO:0000269" key="3">
    <source>
    </source>
</evidence>
<evidence type="ECO:0000269" key="4">
    <source>
    </source>
</evidence>
<evidence type="ECO:0000269" key="5">
    <source>
    </source>
</evidence>
<evidence type="ECO:0000269" key="6">
    <source ref="2"/>
</evidence>
<evidence type="ECO:0000303" key="7">
    <source>
    </source>
</evidence>
<evidence type="ECO:0000305" key="8"/>
<name>DHRS3_HUMAN</name>
<gene>
    <name type="primary">DHRS3</name>
    <name type="synonym">RDH17</name>
    <name type="synonym">SDR16C1</name>
    <name type="ORF">UNQ2424/PRO4983</name>
</gene>
<sequence length="302" mass="33548">MVWKRLGALVMFPLQMIYLVVKAAVGLVLPAKLRDLSRENVLITGGGRGIGRQLAREFAERGARKIVLWGRTEKCLKETTEEIRQMGTECHYFICDVGNREEVYQTAKAVREKVGDITILVNNAAVVHGKSLMDSDDDALLKSQHINTLGQFWTTKAFLPRMLELQNGHIVCLNSVLALSAIPGAIDYCTSKASAFAFMESLTLGLLDCPGVSATTVLPFHTSTEMFQGMRVRFPNLFPPLKPETVARRTVEAVQLNQALLLLPWTMHALVILKSILPQAALEEIHKFSGTYTCMNTFKGRT</sequence>
<keyword id="KW-0025">Alternative splicing</keyword>
<keyword id="KW-0443">Lipid metabolism</keyword>
<keyword id="KW-0472">Membrane</keyword>
<keyword id="KW-0521">NADP</keyword>
<keyword id="KW-0560">Oxidoreductase</keyword>
<keyword id="KW-1267">Proteomics identification</keyword>
<keyword id="KW-1185">Reference proteome</keyword>
<keyword id="KW-0812">Transmembrane</keyword>
<keyword id="KW-1133">Transmembrane helix</keyword>
<feature type="chain" id="PRO_0000054644" description="Short-chain dehydrogenase/reductase 3">
    <location>
        <begin position="1"/>
        <end position="302"/>
    </location>
</feature>
<feature type="transmembrane region" description="Helical" evidence="2">
    <location>
        <begin position="9"/>
        <end position="29"/>
    </location>
</feature>
<feature type="transmembrane region" description="Helical" evidence="2">
    <location>
        <begin position="170"/>
        <end position="190"/>
    </location>
</feature>
<feature type="transmembrane region" description="Helical" evidence="2">
    <location>
        <begin position="195"/>
        <end position="215"/>
    </location>
</feature>
<feature type="transmembrane region" description="Helical" evidence="2">
    <location>
        <begin position="253"/>
        <end position="273"/>
    </location>
</feature>
<feature type="active site" description="Proton acceptor" evidence="1">
    <location>
        <position position="188"/>
    </location>
</feature>
<feature type="binding site" evidence="1">
    <location>
        <position position="175"/>
    </location>
    <ligand>
        <name>substrate</name>
    </ligand>
</feature>
<feature type="splice variant" id="VSP_013256" description="In isoform 2." evidence="7">
    <original>GDITILVNNAAVVHGKSLMDSDDDALLKSQHINTLGQFWTTKAFLPRMLELQN</original>
    <variation>CSLGGSIPSTADHRLIPGKENILMWPGRELCLWQNGFARGTFGDSPMKLAPVT</variation>
    <location>
        <begin position="115"/>
        <end position="167"/>
    </location>
</feature>
<feature type="splice variant" id="VSP_013257" description="In isoform 2." evidence="7">
    <location>
        <begin position="168"/>
        <end position="302"/>
    </location>
</feature>
<feature type="sequence variant" id="VAR_067443" description="In dbSNP:rs1128251." evidence="4 5 6">
    <original>V</original>
    <variation>A</variation>
    <location>
        <position position="2"/>
    </location>
</feature>
<protein>
    <recommendedName>
        <fullName>Short-chain dehydrogenase/reductase 3</fullName>
        <ecNumber evidence="5">1.1.1.300</ecNumber>
    </recommendedName>
    <alternativeName>
        <fullName>DD83.1</fullName>
    </alternativeName>
    <alternativeName>
        <fullName>Retinal short-chain dehydrogenase/reductase 1</fullName>
        <shortName>retSDR1</shortName>
    </alternativeName>
    <alternativeName>
        <fullName>Retinol dehydrogenase 17</fullName>
    </alternativeName>
    <alternativeName>
        <fullName>Short chain dehydrogenase/reductase family 16C member 1</fullName>
    </alternativeName>
</protein>
<dbReference type="EC" id="1.1.1.300" evidence="5"/>
<dbReference type="EMBL" id="AF061741">
    <property type="protein sequence ID" value="AAC63263.1"/>
    <property type="molecule type" value="mRNA"/>
</dbReference>
<dbReference type="EMBL" id="AF179237">
    <property type="protein sequence ID" value="AAD55402.1"/>
    <property type="molecule type" value="Genomic_DNA"/>
</dbReference>
<dbReference type="EMBL" id="AF179234">
    <property type="protein sequence ID" value="AAD55402.1"/>
    <property type="status" value="JOINED"/>
    <property type="molecule type" value="Genomic_DNA"/>
</dbReference>
<dbReference type="EMBL" id="AF179235">
    <property type="protein sequence ID" value="AAD55402.1"/>
    <property type="status" value="JOINED"/>
    <property type="molecule type" value="Genomic_DNA"/>
</dbReference>
<dbReference type="EMBL" id="AF179236">
    <property type="protein sequence ID" value="AAD55402.1"/>
    <property type="status" value="JOINED"/>
    <property type="molecule type" value="Genomic_DNA"/>
</dbReference>
<dbReference type="EMBL" id="AY358093">
    <property type="protein sequence ID" value="AAQ88460.1"/>
    <property type="status" value="ALT_FRAME"/>
    <property type="molecule type" value="mRNA"/>
</dbReference>
<dbReference type="EMBL" id="AK312961">
    <property type="protein sequence ID" value="BAG35800.1"/>
    <property type="molecule type" value="mRNA"/>
</dbReference>
<dbReference type="EMBL" id="BX648476">
    <property type="protein sequence ID" value="CAI46033.1"/>
    <property type="molecule type" value="mRNA"/>
</dbReference>
<dbReference type="EMBL" id="AL513016">
    <property type="status" value="NOT_ANNOTATED_CDS"/>
    <property type="molecule type" value="Genomic_DNA"/>
</dbReference>
<dbReference type="EMBL" id="AL645761">
    <property type="status" value="NOT_ANNOTATED_CDS"/>
    <property type="molecule type" value="Genomic_DNA"/>
</dbReference>
<dbReference type="EMBL" id="CH471130">
    <property type="protein sequence ID" value="EAW71743.1"/>
    <property type="molecule type" value="Genomic_DNA"/>
</dbReference>
<dbReference type="EMBL" id="BC002730">
    <property type="protein sequence ID" value="AAH02730.1"/>
    <property type="molecule type" value="mRNA"/>
</dbReference>
<dbReference type="CCDS" id="CCDS146.1">
    <molecule id="O75911-1"/>
</dbReference>
<dbReference type="RefSeq" id="NP_004744.2">
    <molecule id="O75911-1"/>
    <property type="nucleotide sequence ID" value="NM_004753.6"/>
</dbReference>
<dbReference type="RefSeq" id="XP_054195601.1">
    <molecule id="O75911-1"/>
    <property type="nucleotide sequence ID" value="XM_054339626.1"/>
</dbReference>
<dbReference type="SMR" id="O75911"/>
<dbReference type="BioGRID" id="114675">
    <property type="interactions" value="51"/>
</dbReference>
<dbReference type="FunCoup" id="O75911">
    <property type="interactions" value="344"/>
</dbReference>
<dbReference type="IntAct" id="O75911">
    <property type="interactions" value="35"/>
</dbReference>
<dbReference type="STRING" id="9606.ENSP00000480439"/>
<dbReference type="DrugBank" id="DB00162">
    <property type="generic name" value="Vitamin A"/>
</dbReference>
<dbReference type="SwissLipids" id="SLP:000001868"/>
<dbReference type="iPTMnet" id="O75911"/>
<dbReference type="PhosphoSitePlus" id="O75911"/>
<dbReference type="BioMuta" id="DHRS3"/>
<dbReference type="jPOST" id="O75911"/>
<dbReference type="MassIVE" id="O75911"/>
<dbReference type="PaxDb" id="9606-ENSP00000480439"/>
<dbReference type="PeptideAtlas" id="O75911"/>
<dbReference type="ProteomicsDB" id="50263">
    <molecule id="O75911-1"/>
</dbReference>
<dbReference type="ProteomicsDB" id="50264">
    <molecule id="O75911-2"/>
</dbReference>
<dbReference type="Pumba" id="O75911"/>
<dbReference type="Antibodypedia" id="2554">
    <property type="antibodies" value="193 antibodies from 26 providers"/>
</dbReference>
<dbReference type="DNASU" id="9249"/>
<dbReference type="Ensembl" id="ENST00000616661.5">
    <molecule id="O75911-1"/>
    <property type="protein sequence ID" value="ENSP00000480439.1"/>
    <property type="gene ID" value="ENSG00000162496.10"/>
</dbReference>
<dbReference type="GeneID" id="9249"/>
<dbReference type="KEGG" id="hsa:9249"/>
<dbReference type="MANE-Select" id="ENST00000616661.5">
    <property type="protein sequence ID" value="ENSP00000480439.1"/>
    <property type="RefSeq nucleotide sequence ID" value="NM_004753.7"/>
    <property type="RefSeq protein sequence ID" value="NP_004744.2"/>
</dbReference>
<dbReference type="UCSC" id="uc031tpa.2">
    <molecule id="O75911-1"/>
    <property type="organism name" value="human"/>
</dbReference>
<dbReference type="AGR" id="HGNC:17693"/>
<dbReference type="CTD" id="9249"/>
<dbReference type="DisGeNET" id="9249"/>
<dbReference type="GeneCards" id="DHRS3"/>
<dbReference type="HGNC" id="HGNC:17693">
    <property type="gene designation" value="DHRS3"/>
</dbReference>
<dbReference type="HPA" id="ENSG00000162496">
    <property type="expression patterns" value="Tissue enhanced (liver)"/>
</dbReference>
<dbReference type="MIM" id="612830">
    <property type="type" value="gene"/>
</dbReference>
<dbReference type="neXtProt" id="NX_O75911"/>
<dbReference type="OpenTargets" id="ENSG00000162496"/>
<dbReference type="PharmGKB" id="PA134952810"/>
<dbReference type="VEuPathDB" id="HostDB:ENSG00000162496"/>
<dbReference type="eggNOG" id="KOG1201">
    <property type="taxonomic scope" value="Eukaryota"/>
</dbReference>
<dbReference type="GeneTree" id="ENSGT00940000158724"/>
<dbReference type="HOGENOM" id="CLU_010194_2_5_1"/>
<dbReference type="InParanoid" id="O75911"/>
<dbReference type="OMA" id="NWYAVLP"/>
<dbReference type="OrthoDB" id="6251714at2759"/>
<dbReference type="PAN-GO" id="O75911">
    <property type="GO annotations" value="4 GO annotations based on evolutionary models"/>
</dbReference>
<dbReference type="PhylomeDB" id="O75911"/>
<dbReference type="TreeFam" id="TF312837"/>
<dbReference type="BioCyc" id="MetaCyc:ENSG00000162496-MONOMER"/>
<dbReference type="BRENDA" id="1.1.1.300">
    <property type="organism ID" value="2681"/>
</dbReference>
<dbReference type="PathwayCommons" id="O75911"/>
<dbReference type="Reactome" id="R-HSA-2187335">
    <property type="pathway name" value="The retinoid cycle in cones (daylight vision)"/>
</dbReference>
<dbReference type="Reactome" id="R-HSA-5365859">
    <property type="pathway name" value="RA biosynthesis pathway"/>
</dbReference>
<dbReference type="SignaLink" id="O75911"/>
<dbReference type="BioGRID-ORCS" id="9249">
    <property type="hits" value="16 hits in 1160 CRISPR screens"/>
</dbReference>
<dbReference type="ChiTaRS" id="DHRS3">
    <property type="organism name" value="human"/>
</dbReference>
<dbReference type="GeneWiki" id="DHRS3"/>
<dbReference type="GenomeRNAi" id="9249"/>
<dbReference type="Pharos" id="O75911">
    <property type="development level" value="Tbio"/>
</dbReference>
<dbReference type="PRO" id="PR:O75911"/>
<dbReference type="Proteomes" id="UP000005640">
    <property type="component" value="Chromosome 1"/>
</dbReference>
<dbReference type="RNAct" id="O75911">
    <property type="molecule type" value="protein"/>
</dbReference>
<dbReference type="Bgee" id="ENSG00000162496">
    <property type="expression patterns" value="Expressed in olfactory bulb and 202 other cell types or tissues"/>
</dbReference>
<dbReference type="ExpressionAtlas" id="O75911">
    <property type="expression patterns" value="baseline and differential"/>
</dbReference>
<dbReference type="GO" id="GO:0005789">
    <property type="term" value="C:endoplasmic reticulum membrane"/>
    <property type="evidence" value="ECO:0000304"/>
    <property type="project" value="Reactome"/>
</dbReference>
<dbReference type="GO" id="GO:0005811">
    <property type="term" value="C:lipid droplet"/>
    <property type="evidence" value="ECO:0000318"/>
    <property type="project" value="GO_Central"/>
</dbReference>
<dbReference type="GO" id="GO:0042622">
    <property type="term" value="C:photoreceptor outer segment membrane"/>
    <property type="evidence" value="ECO:0000304"/>
    <property type="project" value="Reactome"/>
</dbReference>
<dbReference type="GO" id="GO:0004745">
    <property type="term" value="F:all-trans-retinol dehydrogenase (NAD+) activity"/>
    <property type="evidence" value="ECO:0000318"/>
    <property type="project" value="GO_Central"/>
</dbReference>
<dbReference type="GO" id="GO:0052650">
    <property type="term" value="F:all-trans-retinol dehydrogenase (NADP+) activity"/>
    <property type="evidence" value="ECO:0000304"/>
    <property type="project" value="Reactome"/>
</dbReference>
<dbReference type="GO" id="GO:0009055">
    <property type="term" value="F:electron transfer activity"/>
    <property type="evidence" value="ECO:0000304"/>
    <property type="project" value="UniProtKB"/>
</dbReference>
<dbReference type="GO" id="GO:0000166">
    <property type="term" value="F:nucleotide binding"/>
    <property type="evidence" value="ECO:0000304"/>
    <property type="project" value="ProtInc"/>
</dbReference>
<dbReference type="GO" id="GO:0060349">
    <property type="term" value="P:bone morphogenesis"/>
    <property type="evidence" value="ECO:0007669"/>
    <property type="project" value="Ensembl"/>
</dbReference>
<dbReference type="GO" id="GO:0060411">
    <property type="term" value="P:cardiac septum morphogenesis"/>
    <property type="evidence" value="ECO:0007669"/>
    <property type="project" value="Ensembl"/>
</dbReference>
<dbReference type="GO" id="GO:0048387">
    <property type="term" value="P:negative regulation of retinoic acid receptor signaling pathway"/>
    <property type="evidence" value="ECO:0007669"/>
    <property type="project" value="Ensembl"/>
</dbReference>
<dbReference type="GO" id="GO:0003151">
    <property type="term" value="P:outflow tract morphogenesis"/>
    <property type="evidence" value="ECO:0007669"/>
    <property type="project" value="Ensembl"/>
</dbReference>
<dbReference type="GO" id="GO:0030278">
    <property type="term" value="P:regulation of ossification"/>
    <property type="evidence" value="ECO:0007669"/>
    <property type="project" value="Ensembl"/>
</dbReference>
<dbReference type="GO" id="GO:0048385">
    <property type="term" value="P:regulation of retinoic acid receptor signaling pathway"/>
    <property type="evidence" value="ECO:0000318"/>
    <property type="project" value="GO_Central"/>
</dbReference>
<dbReference type="GO" id="GO:0001523">
    <property type="term" value="P:retinoid metabolic process"/>
    <property type="evidence" value="ECO:0000318"/>
    <property type="project" value="GO_Central"/>
</dbReference>
<dbReference type="GO" id="GO:0042572">
    <property type="term" value="P:retinol metabolic process"/>
    <property type="evidence" value="ECO:0000304"/>
    <property type="project" value="UniProtKB"/>
</dbReference>
<dbReference type="GO" id="GO:0060021">
    <property type="term" value="P:roof of mouth development"/>
    <property type="evidence" value="ECO:0007669"/>
    <property type="project" value="Ensembl"/>
</dbReference>
<dbReference type="GO" id="GO:0007601">
    <property type="term" value="P:visual perception"/>
    <property type="evidence" value="ECO:0000304"/>
    <property type="project" value="ProtInc"/>
</dbReference>
<dbReference type="CDD" id="cd05339">
    <property type="entry name" value="17beta-HSDXI-like_SDR_c"/>
    <property type="match status" value="1"/>
</dbReference>
<dbReference type="FunFam" id="3.40.50.720:FF:000131">
    <property type="entry name" value="Short-chain dehydrogenase/reductase 3"/>
    <property type="match status" value="1"/>
</dbReference>
<dbReference type="Gene3D" id="3.40.50.720">
    <property type="entry name" value="NAD(P)-binding Rossmann-like Domain"/>
    <property type="match status" value="1"/>
</dbReference>
<dbReference type="InterPro" id="IPR036291">
    <property type="entry name" value="NAD(P)-bd_dom_sf"/>
</dbReference>
<dbReference type="InterPro" id="IPR002347">
    <property type="entry name" value="SDR_fam"/>
</dbReference>
<dbReference type="PANTHER" id="PTHR24322">
    <property type="entry name" value="PKSB"/>
    <property type="match status" value="1"/>
</dbReference>
<dbReference type="PANTHER" id="PTHR24322:SF483">
    <property type="entry name" value="SHORT-CHAIN DEHYDROGENASE_REDUCTASE 3"/>
    <property type="match status" value="1"/>
</dbReference>
<dbReference type="Pfam" id="PF00106">
    <property type="entry name" value="adh_short"/>
    <property type="match status" value="1"/>
</dbReference>
<dbReference type="PRINTS" id="PR00081">
    <property type="entry name" value="GDHRDH"/>
</dbReference>
<dbReference type="PRINTS" id="PR00080">
    <property type="entry name" value="SDRFAMILY"/>
</dbReference>
<dbReference type="SMART" id="SM00822">
    <property type="entry name" value="PKS_KR"/>
    <property type="match status" value="1"/>
</dbReference>
<dbReference type="SUPFAM" id="SSF51735">
    <property type="entry name" value="NAD(P)-binding Rossmann-fold domains"/>
    <property type="match status" value="1"/>
</dbReference>